<comment type="function">
    <molecule>Capsid protein alpha</molecule>
    <text evidence="6">Capsid protein alpha self-assembles to form an icosahedral procapsid with a T=3 symmetry, about 30 nm in diameter, and consisting of 60 capsid proteins trimers. In addition, 240 calcium ions are incorporated per capsid during assembly. The capsid encapsulates the two genomic RNAs. Capsid maturation occurs via autoproteolytic cleavage of capsid protein alpha generating capsid protein beta and the membrane-active peptide gamma.</text>
</comment>
<comment type="function">
    <molecule>Membrane-lytic peptide gamma</molecule>
    <text evidence="4 5">Membrane-permeabilizing peptide produced by virus maturation, thereby creating the infectious virion (PubMed:33853772). After endocytosis into the host cell, peptide gamma is probably exposed in endosomes, where it permeabilizes the endosomal membrane, facilitating translocation of viral capsid or RNA into the cytoplasm (PubMed:33853772). Involved in specific recognition and packaging of viral RNA during assembly (PubMed:9765417).</text>
</comment>
<comment type="catalytic activity">
    <molecule>Capsid protein beta</molecule>
    <reaction evidence="2">
        <text>Hydrolysis of an asparaginyl bond involved in the maturation of the structural protein of the virus, typically -Asn-|-Ala- or -Asn-|-Phe-.</text>
        <dbReference type="EC" id="3.4.23.44"/>
    </reaction>
</comment>
<comment type="subcellular location">
    <molecule>Capsid protein beta</molecule>
    <subcellularLocation>
        <location evidence="7">Virion</location>
    </subcellularLocation>
</comment>
<comment type="subcellular location">
    <molecule>Membrane-lytic peptide gamma</molecule>
    <subcellularLocation>
        <location evidence="7">Virion</location>
    </subcellularLocation>
    <text evidence="7">Located inside the capsid and probably externalized in early endosomes.</text>
</comment>
<comment type="PTM">
    <molecule>Capsid protein alpha</molecule>
    <text evidence="2 3">Capsid protein alpha autocatalytically maturates into capsid protein beta and peptide gamma.</text>
</comment>
<comment type="similarity">
    <text evidence="7">Belongs to the peptidase A6 family.</text>
</comment>
<comment type="online information" name="Virus Particle ExploreR db">
    <link uri="https://viperdb.org/Info_Page.php?VDB=fhv"/>
    <text>Icosahedral capsid structure</text>
</comment>
<feature type="chain" id="PRO_0000402388" description="Capsid protein alpha">
    <location>
        <begin position="1"/>
        <end position="407"/>
    </location>
</feature>
<feature type="chain" id="PRO_0000039194" description="Capsid protein beta">
    <location>
        <begin position="1"/>
        <end position="363"/>
    </location>
</feature>
<feature type="chain" id="PRO_0000039195" description="Membrane-lytic peptide gamma">
    <location>
        <begin position="364"/>
        <end position="407"/>
    </location>
</feature>
<feature type="region of interest" description="Disordered" evidence="1">
    <location>
        <begin position="1"/>
        <end position="47"/>
    </location>
</feature>
<feature type="compositionally biased region" description="Basic residues" evidence="1">
    <location>
        <begin position="1"/>
        <end position="12"/>
    </location>
</feature>
<feature type="compositionally biased region" description="Low complexity" evidence="1">
    <location>
        <begin position="13"/>
        <end position="32"/>
    </location>
</feature>
<feature type="compositionally biased region" description="Basic residues" evidence="1">
    <location>
        <begin position="33"/>
        <end position="47"/>
    </location>
</feature>
<feature type="active site" evidence="8">
    <location>
        <position position="75"/>
    </location>
</feature>
<feature type="binding site" evidence="10">
    <location>
        <position position="161"/>
    </location>
    <ligand>
        <name>Ca(2+)</name>
        <dbReference type="ChEBI" id="CHEBI:29108"/>
        <label>1</label>
    </ligand>
</feature>
<feature type="binding site" evidence="11 12 13">
    <location>
        <position position="161"/>
    </location>
    <ligand>
        <name>Ca(2+)</name>
        <dbReference type="ChEBI" id="CHEBI:29108"/>
        <label>2</label>
    </ligand>
</feature>
<feature type="binding site" evidence="13">
    <location>
        <position position="161"/>
    </location>
    <ligand>
        <name>Ca(2+)</name>
        <dbReference type="ChEBI" id="CHEBI:29108"/>
        <label>3</label>
    </ligand>
</feature>
<feature type="binding site" evidence="12 13">
    <location>
        <position position="221"/>
    </location>
    <ligand>
        <name>Ca(2+)</name>
        <dbReference type="ChEBI" id="CHEBI:29108"/>
        <label>2</label>
    </ligand>
</feature>
<feature type="binding site" evidence="13">
    <location>
        <position position="221"/>
    </location>
    <ligand>
        <name>Ca(2+)</name>
        <dbReference type="ChEBI" id="CHEBI:29108"/>
        <label>3</label>
    </ligand>
</feature>
<feature type="binding site" evidence="11">
    <location>
        <position position="221"/>
    </location>
    <ligand>
        <name>Ca(2+)</name>
        <dbReference type="ChEBI" id="CHEBI:29108"/>
        <label>4</label>
    </ligand>
</feature>
<feature type="binding site" evidence="10">
    <location>
        <position position="249"/>
    </location>
    <ligand>
        <name>Ca(2+)</name>
        <dbReference type="ChEBI" id="CHEBI:29108"/>
        <label>5</label>
    </ligand>
</feature>
<feature type="binding site" evidence="10">
    <location>
        <position position="251"/>
    </location>
    <ligand>
        <name>Ca(2+)</name>
        <dbReference type="ChEBI" id="CHEBI:29108"/>
        <label>5</label>
    </ligand>
</feature>
<feature type="binding site" evidence="11 12 13">
    <location>
        <position position="273"/>
    </location>
    <ligand>
        <name>Ca(2+)</name>
        <dbReference type="ChEBI" id="CHEBI:29108"/>
        <label>2</label>
    </ligand>
</feature>
<feature type="binding site" evidence="11">
    <location>
        <position position="273"/>
    </location>
    <ligand>
        <name>Ca(2+)</name>
        <dbReference type="ChEBI" id="CHEBI:29108"/>
        <label>4</label>
    </ligand>
</feature>
<feature type="site" description="Cleavage; by autolysis" evidence="2">
    <location>
        <begin position="363"/>
        <end position="364"/>
    </location>
</feature>
<feature type="site" description="Interaction with viral RNA genome" evidence="5">
    <location>
        <position position="402"/>
    </location>
</feature>
<feature type="site" description="Interaction with viral RNA genome" evidence="5">
    <location>
        <position position="405"/>
    </location>
</feature>
<feature type="site" description="Interaction with viral RNA genome" evidence="5">
    <location>
        <position position="407"/>
    </location>
</feature>
<feature type="disulfide bond">
    <location>
        <begin position="69"/>
        <end position="318"/>
    </location>
</feature>
<feature type="mutagenesis site" description="Prevents maturation cleavage." evidence="2">
    <original>N</original>
    <variation>A</variation>
    <variation>D</variation>
    <variation>T</variation>
    <location>
        <position position="363"/>
    </location>
</feature>
<feature type="mutagenesis site" description="Lack in specificity of viral RNA encapsidation." evidence="5">
    <original>F</original>
    <variation>A</variation>
    <location>
        <position position="402"/>
    </location>
</feature>
<feature type="mutagenesis site" description="No effect on specificity of viral RNA encapsidation." evidence="5">
    <original>E</original>
    <variation>A</variation>
    <location>
        <position position="403"/>
    </location>
</feature>
<feature type="mutagenesis site" description="Lack in specificity of viral RNA encapsidation." evidence="5">
    <original>F</original>
    <variation>A</variation>
    <location>
        <position position="405"/>
    </location>
</feature>
<feature type="mutagenesis site" description="Lack in specificity of viral RNA encapsidation." evidence="5">
    <original>F</original>
    <variation>A</variation>
    <location>
        <position position="407"/>
    </location>
</feature>
<feature type="helix" evidence="16">
    <location>
        <begin position="61"/>
        <end position="71"/>
    </location>
</feature>
<feature type="strand" evidence="16">
    <location>
        <begin position="76"/>
        <end position="78"/>
    </location>
</feature>
<feature type="strand" evidence="16">
    <location>
        <begin position="90"/>
        <end position="105"/>
    </location>
</feature>
<feature type="strand" evidence="16">
    <location>
        <begin position="109"/>
        <end position="115"/>
    </location>
</feature>
<feature type="strand" evidence="16">
    <location>
        <begin position="121"/>
        <end position="129"/>
    </location>
</feature>
<feature type="strand" evidence="16">
    <location>
        <begin position="139"/>
        <end position="144"/>
    </location>
</feature>
<feature type="helix" evidence="16">
    <location>
        <begin position="148"/>
        <end position="152"/>
    </location>
</feature>
<feature type="strand" evidence="16">
    <location>
        <begin position="161"/>
        <end position="177"/>
    </location>
</feature>
<feature type="turn" evidence="16">
    <location>
        <begin position="181"/>
        <end position="183"/>
    </location>
</feature>
<feature type="strand" evidence="16">
    <location>
        <begin position="187"/>
        <end position="193"/>
    </location>
</feature>
<feature type="strand" evidence="16">
    <location>
        <begin position="196"/>
        <end position="204"/>
    </location>
</feature>
<feature type="strand" evidence="16">
    <location>
        <begin position="210"/>
        <end position="219"/>
    </location>
</feature>
<feature type="helix" evidence="16">
    <location>
        <begin position="220"/>
        <end position="224"/>
    </location>
</feature>
<feature type="strand" evidence="16">
    <location>
        <begin position="228"/>
        <end position="234"/>
    </location>
</feature>
<feature type="helix" evidence="16">
    <location>
        <begin position="235"/>
        <end position="237"/>
    </location>
</feature>
<feature type="strand" evidence="16">
    <location>
        <begin position="239"/>
        <end position="242"/>
    </location>
</feature>
<feature type="strand" evidence="16">
    <location>
        <begin position="247"/>
        <end position="249"/>
    </location>
</feature>
<feature type="strand" evidence="16">
    <location>
        <begin position="260"/>
        <end position="263"/>
    </location>
</feature>
<feature type="helix" evidence="16">
    <location>
        <begin position="269"/>
        <end position="272"/>
    </location>
</feature>
<feature type="strand" evidence="16">
    <location>
        <begin position="275"/>
        <end position="279"/>
    </location>
</feature>
<feature type="turn" evidence="16">
    <location>
        <begin position="283"/>
        <end position="285"/>
    </location>
</feature>
<feature type="strand" evidence="16">
    <location>
        <begin position="296"/>
        <end position="302"/>
    </location>
</feature>
<feature type="strand" evidence="16">
    <location>
        <begin position="309"/>
        <end position="323"/>
    </location>
</feature>
<feature type="helix" evidence="16">
    <location>
        <begin position="329"/>
        <end position="332"/>
    </location>
</feature>
<feature type="helix" evidence="16">
    <location>
        <begin position="341"/>
        <end position="353"/>
    </location>
</feature>
<feature type="strand" evidence="16">
    <location>
        <begin position="356"/>
        <end position="358"/>
    </location>
</feature>
<feature type="helix" evidence="16">
    <location>
        <begin position="360"/>
        <end position="362"/>
    </location>
</feature>
<feature type="helix" evidence="16">
    <location>
        <begin position="367"/>
        <end position="379"/>
    </location>
</feature>
<gene>
    <name type="primary">alpha</name>
</gene>
<reference key="1">
    <citation type="journal article" date="1989" name="Nucleic Acids Res.">
        <title>Nucleotide sequences of three Nodavirus RNA2's: the messengers for their coat protein precursors.</title>
        <authorList>
            <person name="Dasgupta R."/>
            <person name="Sgro J.-Y."/>
        </authorList>
    </citation>
    <scope>NUCLEOTIDE SEQUENCE [GENOMIC RNA]</scope>
</reference>
<reference key="2">
    <citation type="journal article" date="1990" name="J. Mol. Biol.">
        <title>Structural homology among four nodaviruses as deduced by sequencing and X-ray crystallography.</title>
        <authorList>
            <person name="Kaesberg P."/>
            <person name="Dasgupta R."/>
            <person name="Sgro J.-Y."/>
            <person name="Wery J.-P."/>
            <person name="Selling B.H."/>
            <person name="Hosur M.V."/>
            <person name="Johnson J.E."/>
        </authorList>
    </citation>
    <scope>CHARACTERIZATION (CAPSID PROTEIN ALPHA)</scope>
</reference>
<reference key="3">
    <citation type="journal article" date="1992" name="J. Virol.">
        <title>Maturation cleavage required for infectivity of a nodavirus.</title>
        <authorList>
            <person name="Schneemann A."/>
            <person name="Zhong W."/>
            <person name="Gallagher T.M."/>
            <person name="Rueckert R.R."/>
        </authorList>
    </citation>
    <scope>PROTEOLYTIC CLEAVAGE (CAPSID PROTEIN ALPHA)</scope>
    <scope>MUTAGENESIS OF ASN-363</scope>
    <scope>CATALYTIC ACTIVITY (CAPSID PROTEIN ALPHA)</scope>
</reference>
<reference key="4">
    <citation type="journal article" date="1998" name="J. Virol.">
        <title>Specific encapsidation of nodavirus RNAs is mediated through the C terminus of capsid precursor protein alpha.</title>
        <authorList>
            <person name="Schneemann A."/>
            <person name="Marshall D."/>
        </authorList>
    </citation>
    <scope>FUNCTION (MEMBRANE-LYTIC PEPTIDE GAMMA)</scope>
    <scope>MUTAGENESIS OF PHE-402; GLU-403; PHE-405 AND PHE-407</scope>
</reference>
<reference key="5">
    <citation type="journal article" date="2009" name="J. Virol.">
        <title>Low endocytic pH and capsid protein autocleavage are critical components of Flock House virus cell entry.</title>
        <authorList>
            <person name="Odegard A.L."/>
            <person name="Kwan M.H."/>
            <person name="Walukiewicz H.E."/>
            <person name="Banerjee M."/>
            <person name="Schneemann A."/>
            <person name="Johnson J.E."/>
        </authorList>
    </citation>
    <scope>FUNCTION (MEMBRANE-LYTIC PEPTIDE GAMMA)</scope>
    <scope>PROTEOLYTIC PROCESSING (CAPSID PROTEIN ALPHA)</scope>
</reference>
<reference key="6">
    <citation type="journal article" date="2021" name="Sci. Adv.">
        <title>Atomistic dynamics of a viral infection process: Release of membrane lytic peptides from a non-enveloped virus.</title>
        <authorList>
            <person name="Jana A.K."/>
            <person name="May E.R."/>
        </authorList>
    </citation>
    <scope>FUNCTION (MEMBRANE-LYTIC PEPTIDE GAMMA)</scope>
</reference>
<reference key="7">
    <citation type="journal article" date="1993" name="Nature">
        <title>Ordered duplex RNA controls capsid architecture in an icosahedral animal virus.</title>
        <authorList>
            <person name="Fisher A.J."/>
            <person name="Johnson J.E."/>
        </authorList>
    </citation>
    <scope>X-RAY CRYSTALLOGRAPHY (3.2 ANGSTROMS)</scope>
</reference>
<reference evidence="9" key="8">
    <citation type="journal article" date="2010" name="J. Virol.">
        <title>Structure and function of a genetically engineered mimic of a nonenveloped virus entry intermediate.</title>
        <authorList>
            <person name="Banerjee M."/>
            <person name="Speir J.A."/>
            <person name="Kwan M.H."/>
            <person name="Huang R."/>
            <person name="Aryanpur P.P."/>
            <person name="Bothner B."/>
            <person name="Johnson J.E."/>
        </authorList>
    </citation>
    <scope>X-RAY CRYSTALLOGRAPHY (3.6 ANGSTROMS)</scope>
    <scope>FUNCTION</scope>
</reference>
<reference evidence="10 11 12 13" key="9">
    <citation type="submission" date="2012-06" db="PDB data bank">
        <title>Structural study of virus assembly intermediates reveals maturation event sequence and a staging position for externalized lytic peptides.</title>
        <authorList>
            <person name="Speir J.A."/>
            <person name="Chen Z."/>
            <person name="Reddy V.S."/>
            <person name="Johnson J.E."/>
        </authorList>
    </citation>
    <scope>X-RAY CRYSTALLOGRAPHY (2.70 ANGSTROMS) OF 1-363 AND 364-407 IN COMPLEX WITH CA(2+)</scope>
</reference>
<reference evidence="14 15" key="10">
    <citation type="journal article" date="2019" name="J. Virol.">
        <title>Structural Dynamics of Nonenveloped Virus Disassembly Intermediates.</title>
        <authorList>
            <person name="Azad K."/>
            <person name="Banerjee M."/>
        </authorList>
    </citation>
    <scope>STRUCTURE BY ELECTRON MICROSCOPY (4.70 ANGSTROMS) OF 1-363</scope>
</reference>
<name>CAPSD_FHV</name>
<organismHost>
    <name type="scientific">Costelytra zealandica</name>
    <dbReference type="NCBI Taxonomy" id="50579"/>
</organismHost>
<organismHost>
    <name type="scientific">Galleria mellonella</name>
    <name type="common">Greater wax moth</name>
    <dbReference type="NCBI Taxonomy" id="7137"/>
</organismHost>
<organismHost>
    <name type="scientific">Hordeum vulgare</name>
    <name type="common">Barley</name>
    <dbReference type="NCBI Taxonomy" id="4513"/>
</organismHost>
<organismHost>
    <name type="scientific">Saccharomyces cerevisiae</name>
    <name type="common">Baker's yeast</name>
    <dbReference type="NCBI Taxonomy" id="4932"/>
</organismHost>
<accession>P12870</accession>
<proteinExistence type="evidence at protein level"/>
<keyword id="KW-0002">3D-structure</keyword>
<keyword id="KW-0064">Aspartyl protease</keyword>
<keyword id="KW-0106">Calcium</keyword>
<keyword id="KW-0167">Capsid protein</keyword>
<keyword id="KW-1015">Disulfide bond</keyword>
<keyword id="KW-0378">Hydrolase</keyword>
<keyword id="KW-0479">Metal-binding</keyword>
<keyword id="KW-0645">Protease</keyword>
<keyword id="KW-1142">T=3 icosahedral capsid protein</keyword>
<keyword id="KW-1162">Viral penetration into host cytoplasm</keyword>
<keyword id="KW-1173">Viral penetration via permeabilization of host membrane</keyword>
<keyword id="KW-0946">Virion</keyword>
<keyword id="KW-1160">Virus entry into host cell</keyword>
<evidence type="ECO:0000256" key="1">
    <source>
        <dbReference type="SAM" id="MobiDB-lite"/>
    </source>
</evidence>
<evidence type="ECO:0000269" key="2">
    <source>
    </source>
</evidence>
<evidence type="ECO:0000269" key="3">
    <source>
    </source>
</evidence>
<evidence type="ECO:0000269" key="4">
    <source>
    </source>
</evidence>
<evidence type="ECO:0000269" key="5">
    <source>
    </source>
</evidence>
<evidence type="ECO:0000303" key="6">
    <source>
    </source>
</evidence>
<evidence type="ECO:0000305" key="7"/>
<evidence type="ECO:0000305" key="8">
    <source>
    </source>
</evidence>
<evidence type="ECO:0007744" key="9">
    <source>
        <dbReference type="PDB" id="3LOB"/>
    </source>
</evidence>
<evidence type="ECO:0007744" key="10">
    <source>
        <dbReference type="PDB" id="4FSJ"/>
    </source>
</evidence>
<evidence type="ECO:0007744" key="11">
    <source>
        <dbReference type="PDB" id="4FTB"/>
    </source>
</evidence>
<evidence type="ECO:0007744" key="12">
    <source>
        <dbReference type="PDB" id="4FTE"/>
    </source>
</evidence>
<evidence type="ECO:0007744" key="13">
    <source>
        <dbReference type="PDB" id="4FTS"/>
    </source>
</evidence>
<evidence type="ECO:0007744" key="14">
    <source>
        <dbReference type="PDB" id="6ITB"/>
    </source>
</evidence>
<evidence type="ECO:0007744" key="15">
    <source>
        <dbReference type="PDB" id="6ITF"/>
    </source>
</evidence>
<evidence type="ECO:0007829" key="16">
    <source>
        <dbReference type="PDB" id="4FTB"/>
    </source>
</evidence>
<organism>
    <name type="scientific">Flock house virus</name>
    <name type="common">FHV</name>
    <dbReference type="NCBI Taxonomy" id="12287"/>
    <lineage>
        <taxon>Viruses</taxon>
        <taxon>Riboviria</taxon>
        <taxon>Orthornavirae</taxon>
        <taxon>Kitrinoviricota</taxon>
        <taxon>Magsaviricetes</taxon>
        <taxon>Nodamuvirales</taxon>
        <taxon>Nodaviridae</taxon>
        <taxon>Alphanodavirus</taxon>
    </lineage>
</organism>
<dbReference type="EC" id="3.4.23.44" evidence="2"/>
<dbReference type="EMBL" id="X15959">
    <property type="protein sequence ID" value="CAA34081.1"/>
    <property type="molecule type" value="Genomic_RNA"/>
</dbReference>
<dbReference type="PIR" id="B34011">
    <property type="entry name" value="VCBBFH"/>
</dbReference>
<dbReference type="RefSeq" id="NP_689442.1">
    <property type="nucleotide sequence ID" value="NC_004144.1"/>
</dbReference>
<dbReference type="PDB" id="3LOB">
    <property type="method" value="X-ray"/>
    <property type="resolution" value="3.60 A"/>
    <property type="chains" value="A/B/C=1-363, D/E/F=364-407"/>
</dbReference>
<dbReference type="PDB" id="4FSJ">
    <property type="method" value="X-ray"/>
    <property type="resolution" value="3.50 A"/>
    <property type="chains" value="A/B/C=1-363, D/E/F=364-407"/>
</dbReference>
<dbReference type="PDB" id="4FTB">
    <property type="method" value="X-ray"/>
    <property type="resolution" value="2.70 A"/>
    <property type="chains" value="A/B/C=1-363, D/E/F=364-407"/>
</dbReference>
<dbReference type="PDB" id="4FTE">
    <property type="method" value="X-ray"/>
    <property type="resolution" value="3.50 A"/>
    <property type="chains" value="A/B/C=1-407"/>
</dbReference>
<dbReference type="PDB" id="4FTS">
    <property type="method" value="X-ray"/>
    <property type="resolution" value="3.20 A"/>
    <property type="chains" value="A/B/C=1-407"/>
</dbReference>
<dbReference type="PDB" id="6ITB">
    <property type="method" value="EM"/>
    <property type="resolution" value="4.70 A"/>
    <property type="chains" value="A/B/C=1-363"/>
</dbReference>
<dbReference type="PDB" id="6ITF">
    <property type="method" value="EM"/>
    <property type="resolution" value="4.70 A"/>
    <property type="chains" value="A/B/C=1-363"/>
</dbReference>
<dbReference type="PDBsum" id="3LOB"/>
<dbReference type="PDBsum" id="4FSJ"/>
<dbReference type="PDBsum" id="4FTB"/>
<dbReference type="PDBsum" id="4FTE"/>
<dbReference type="PDBsum" id="4FTS"/>
<dbReference type="PDBsum" id="6ITB"/>
<dbReference type="PDBsum" id="6ITF"/>
<dbReference type="EMDB" id="EMD-9730"/>
<dbReference type="SMR" id="P12870"/>
<dbReference type="MEROPS" id="N01.001"/>
<dbReference type="TCDB" id="1.A.61.1.2">
    <property type="family name" value="the insect nodavirus channel-forming chain f (gamma-peptide) family"/>
</dbReference>
<dbReference type="KEGG" id="vg:962115"/>
<dbReference type="OrthoDB" id="10195at10239"/>
<dbReference type="EvolutionaryTrace" id="P12870"/>
<dbReference type="Proteomes" id="UP000203899">
    <property type="component" value="Genome"/>
</dbReference>
<dbReference type="GO" id="GO:0039617">
    <property type="term" value="C:T=3 icosahedral viral capsid"/>
    <property type="evidence" value="ECO:0007669"/>
    <property type="project" value="UniProtKB-KW"/>
</dbReference>
<dbReference type="GO" id="GO:0004190">
    <property type="term" value="F:aspartic-type endopeptidase activity"/>
    <property type="evidence" value="ECO:0007669"/>
    <property type="project" value="UniProtKB-KW"/>
</dbReference>
<dbReference type="GO" id="GO:0046872">
    <property type="term" value="F:metal ion binding"/>
    <property type="evidence" value="ECO:0007669"/>
    <property type="project" value="UniProtKB-KW"/>
</dbReference>
<dbReference type="GO" id="GO:0006508">
    <property type="term" value="P:proteolysis"/>
    <property type="evidence" value="ECO:0007669"/>
    <property type="project" value="UniProtKB-KW"/>
</dbReference>
<dbReference type="GO" id="GO:0140267">
    <property type="term" value="P:symbiont entry into host cell via permeabilization of host membrane"/>
    <property type="evidence" value="ECO:0007669"/>
    <property type="project" value="UniProtKB-KW"/>
</dbReference>
<dbReference type="Gene3D" id="2.60.120.20">
    <property type="match status" value="1"/>
</dbReference>
<dbReference type="InterPro" id="IPR000696">
    <property type="entry name" value="Peptidase_A6"/>
</dbReference>
<dbReference type="InterPro" id="IPR029053">
    <property type="entry name" value="Viral_coat"/>
</dbReference>
<dbReference type="Pfam" id="PF01829">
    <property type="entry name" value="Peptidase_A6"/>
    <property type="match status" value="1"/>
</dbReference>
<dbReference type="PRINTS" id="PR00863">
    <property type="entry name" value="NODAVIRPTASE"/>
</dbReference>
<dbReference type="SUPFAM" id="SSF88633">
    <property type="entry name" value="Positive stranded ssRNA viruses"/>
    <property type="match status" value="1"/>
</dbReference>
<sequence>MVNNNRPRRQRAQRVVVTTTQTAPVPQQNVPRNGRRRRNRTRRNRRRVRGMNMAALTRLSQPGLAFLKCAFAPPDFNTDPGKGIPDRFEGKVVSRKDVLNQSISFTAGQDTFILIAPTPGVAYWSASVPAGTFPTSATTFNPVNYPGFTSMFGTTSTSRSDQVSSFRYASMNVGIYPTSNLMQFAGSITVWKCPVKLSTVQFPVATDPATSSLVHTLVGLDGVLAVGPDNFSESFIKGVFSQSACNEPDFEFNDILEGIQTLPPANVSLGSTGQPFTMDSGAEATSGVVGWGNMDTIVIRVSAPEGAVNSAILKAWSCIEYRPNPNAMLYQFGHDSPPLDEVALQEYRTVARSLPVAVIAAQNASMWERVKSIIKSSLAAASNIPGPIGVAASGISGLSALFEGFGF</sequence>
<protein>
    <recommendedName>
        <fullName>Capsid protein alpha</fullName>
        <ecNumber evidence="2">3.4.23.44</ecNumber>
    </recommendedName>
    <component>
        <recommendedName>
            <fullName>Capsid protein beta</fullName>
        </recommendedName>
        <alternativeName>
            <fullName>Coat protein beta</fullName>
        </alternativeName>
        <alternativeName>
            <fullName>Nodavirus endopeptidase</fullName>
        </alternativeName>
    </component>
    <component>
        <recommendedName>
            <fullName>Membrane-lytic peptide gamma</fullName>
        </recommendedName>
        <alternativeName>
            <fullName>Coat protein gamma</fullName>
        </alternativeName>
    </component>
</protein>